<reference key="1">
    <citation type="submission" date="2003-06" db="EMBL/GenBank/DDBJ databases">
        <title>The complete genome sequence of Haemophilus ducreyi.</title>
        <authorList>
            <person name="Munson R.S. Jr."/>
            <person name="Ray W.C."/>
            <person name="Mahairas G."/>
            <person name="Sabo P."/>
            <person name="Mungur R."/>
            <person name="Johnson L."/>
            <person name="Nguyen D."/>
            <person name="Wang J."/>
            <person name="Forst C."/>
            <person name="Hood L."/>
        </authorList>
    </citation>
    <scope>NUCLEOTIDE SEQUENCE [LARGE SCALE GENOMIC DNA]</scope>
    <source>
        <strain>35000HP / ATCC 700724</strain>
    </source>
</reference>
<comment type="similarity">
    <text evidence="1">Belongs to the bacterial ribosomal protein bL36 family.</text>
</comment>
<dbReference type="EMBL" id="AE017143">
    <property type="protein sequence ID" value="AAP96648.1"/>
    <property type="molecule type" value="Genomic_DNA"/>
</dbReference>
<dbReference type="SMR" id="Q7VKI0"/>
<dbReference type="STRING" id="233412.HD_1926"/>
<dbReference type="KEGG" id="hdu:HD_1926"/>
<dbReference type="eggNOG" id="COG0257">
    <property type="taxonomic scope" value="Bacteria"/>
</dbReference>
<dbReference type="HOGENOM" id="CLU_135723_3_3_6"/>
<dbReference type="OrthoDB" id="9801558at2"/>
<dbReference type="Proteomes" id="UP000001022">
    <property type="component" value="Chromosome"/>
</dbReference>
<dbReference type="GO" id="GO:1990904">
    <property type="term" value="C:ribonucleoprotein complex"/>
    <property type="evidence" value="ECO:0007669"/>
    <property type="project" value="UniProtKB-KW"/>
</dbReference>
<dbReference type="GO" id="GO:0005840">
    <property type="term" value="C:ribosome"/>
    <property type="evidence" value="ECO:0007669"/>
    <property type="project" value="UniProtKB-KW"/>
</dbReference>
<dbReference type="GO" id="GO:0003735">
    <property type="term" value="F:structural constituent of ribosome"/>
    <property type="evidence" value="ECO:0007669"/>
    <property type="project" value="InterPro"/>
</dbReference>
<dbReference type="GO" id="GO:0006412">
    <property type="term" value="P:translation"/>
    <property type="evidence" value="ECO:0007669"/>
    <property type="project" value="UniProtKB-UniRule"/>
</dbReference>
<dbReference type="HAMAP" id="MF_00251">
    <property type="entry name" value="Ribosomal_bL36"/>
    <property type="match status" value="1"/>
</dbReference>
<dbReference type="InterPro" id="IPR000473">
    <property type="entry name" value="Ribosomal_bL36"/>
</dbReference>
<dbReference type="InterPro" id="IPR035977">
    <property type="entry name" value="Ribosomal_bL36_sp"/>
</dbReference>
<dbReference type="InterPro" id="IPR047621">
    <property type="entry name" value="Ribosomal_L36_bact"/>
</dbReference>
<dbReference type="NCBIfam" id="NF002021">
    <property type="entry name" value="PRK00831.1"/>
    <property type="match status" value="1"/>
</dbReference>
<dbReference type="NCBIfam" id="TIGR01022">
    <property type="entry name" value="rpmJ_bact"/>
    <property type="match status" value="1"/>
</dbReference>
<dbReference type="PANTHER" id="PTHR47781">
    <property type="entry name" value="50S RIBOSOMAL PROTEIN L36 2"/>
    <property type="match status" value="1"/>
</dbReference>
<dbReference type="PANTHER" id="PTHR47781:SF1">
    <property type="entry name" value="LARGE RIBOSOMAL SUBUNIT PROTEIN BL36B"/>
    <property type="match status" value="1"/>
</dbReference>
<dbReference type="Pfam" id="PF00444">
    <property type="entry name" value="Ribosomal_L36"/>
    <property type="match status" value="1"/>
</dbReference>
<dbReference type="SUPFAM" id="SSF57840">
    <property type="entry name" value="Ribosomal protein L36"/>
    <property type="match status" value="1"/>
</dbReference>
<dbReference type="PROSITE" id="PS00828">
    <property type="entry name" value="RIBOSOMAL_L36"/>
    <property type="match status" value="1"/>
</dbReference>
<feature type="chain" id="PRO_0000126192" description="Large ribosomal subunit protein bL36B">
    <location>
        <begin position="1"/>
        <end position="41"/>
    </location>
</feature>
<protein>
    <recommendedName>
        <fullName evidence="1">Large ribosomal subunit protein bL36B</fullName>
    </recommendedName>
    <alternativeName>
        <fullName evidence="2">50S ribosomal protein L36 2</fullName>
    </alternativeName>
</protein>
<keyword id="KW-1185">Reference proteome</keyword>
<keyword id="KW-0687">Ribonucleoprotein</keyword>
<keyword id="KW-0689">Ribosomal protein</keyword>
<name>RL362_HAEDU</name>
<accession>Q7VKI0</accession>
<sequence length="41" mass="4884">MKILNSLKTAKSRHPDCQIVRRKGKLYVICKTNPRFKARQR</sequence>
<evidence type="ECO:0000255" key="1">
    <source>
        <dbReference type="HAMAP-Rule" id="MF_00251"/>
    </source>
</evidence>
<evidence type="ECO:0000305" key="2"/>
<proteinExistence type="inferred from homology"/>
<gene>
    <name evidence="1" type="primary">rpmJ2</name>
    <name type="ordered locus">HD_1926</name>
</gene>
<organism>
    <name type="scientific">Haemophilus ducreyi (strain 35000HP / ATCC 700724)</name>
    <dbReference type="NCBI Taxonomy" id="233412"/>
    <lineage>
        <taxon>Bacteria</taxon>
        <taxon>Pseudomonadati</taxon>
        <taxon>Pseudomonadota</taxon>
        <taxon>Gammaproteobacteria</taxon>
        <taxon>Pasteurellales</taxon>
        <taxon>Pasteurellaceae</taxon>
        <taxon>Haemophilus</taxon>
    </lineage>
</organism>